<name>RPOC_MYCBT</name>
<sequence>MLDVNFFDELRIGLATAEDIRQWSYGEVKKPETINYRTLKPEKDGLFCEKIFGPTRDWECYCGKYKRAPFKGIICERCGVEVTRAKVRRERMGHIELAAPVTHIWYFKGVPSRLGYLLDLAPKDLEKIIYFAAYVITSVDEEMRHNELSTLEAEMAVERKAVEDQRDGELEARAQKLEADLAELEAEGAKADARRKVRDGGEREMRQIRDRAQRELDRLEDIWSTFTKLAPKQLIVDENLYRELVDRYGEYFTGAMGAESIQKLIENFDIDAEAESLRDVIRNGKGQKKLRALKRLKVVAAFQQSGNSPMGMVLDAVPVIPPELRPMVQLDGGRFATSDLNDLYRRVINRNNRLKRLIDLGAPEIIVNNEKRMLQESVDALFDNGRRGRPVTGPGNRPLKSLSDLLKGKQGRFRQNLLGKRVDYSGRSVIVVGPQLKLHQCGLPKLMALELFKPFVMKRLVDLNHAQNIKSAKRMVERQRPQVWDVLEEVIAEHPVLLNRAPTLHRLGIQAFEPMLVEGKAIQLHPLVCEAFNADFDGDQMAVHLPLSAEAQAEARILMLSSNNILSPASGRPLAMPRLDMVTGLYYLTTEVPGDTGEYQPASGDHPETGVYSSPAEAIMAADRGVLSVRAKIKVRLTQLRPPVEIEAELFGHSGWQPGDAWMAETTLGRVMFNELLPLGYPFVNKQMHKKVQAAIINDLAERYPMIVVAQTVDKLKDAGFYWATRSGVTVSMADVLVPPRKKEILDHYEERADKVEKQFQRGALNHDERNEALVEIWKEATDEVGQALREHYPDDNPIITIVDSGATGNFTQTRTLAGMKGLVTNPKGEFIPRPVKSSFREGLTVLEYFINTHGARKGLADTALRTADSGYLTRRLVDVSQDVIVREHDCQTERGIVVELAERAPDGTLIRDPYIETSAYARTLGTDAVDEAGNVIVERGQDLGDPEIDALLAAGITQVKVRSVLTCATSTGVCATCYGRSMATGKLVDIGEAVGIVAAQSIGEPGTQLTMRTFHQGGVGEDITGGLPRVQELFEARVPRGKAPIADVTGRVRLEDGERFYKITIVPDDGGEEVVYDKISKRQRLRVFKHEDGSERVLSDGDHVEVGQQLMEGSADPHEVLRVQGPREVQIHLVREVQEVYRAQGVSIHDKHIEVIVRQMLRRVTIIDSGSTEFLPGSLIDRAEFEAENRRVVAEGGEPAAGRPVLMGITKASLATDSWLSAASFQETTRVLTDAAINCRSDKLNGLKENVIIGKLIPAGTGINRYRNIAVQPTEEARAAAYTIPSYEDQYYSPDFGAATGAAVPLDDYGYSDYR</sequence>
<accession>C1AL01</accession>
<proteinExistence type="inferred from homology"/>
<dbReference type="EC" id="2.7.7.6" evidence="1"/>
<dbReference type="EMBL" id="AP010918">
    <property type="protein sequence ID" value="BAH24980.1"/>
    <property type="molecule type" value="Genomic_DNA"/>
</dbReference>
<dbReference type="RefSeq" id="WP_012666331.1">
    <property type="nucleotide sequence ID" value="NZ_CP014566.1"/>
</dbReference>
<dbReference type="SMR" id="C1AL01"/>
<dbReference type="KEGG" id="mbt:JTY_0687"/>
<dbReference type="HOGENOM" id="CLU_000524_3_1_11"/>
<dbReference type="GO" id="GO:0000428">
    <property type="term" value="C:DNA-directed RNA polymerase complex"/>
    <property type="evidence" value="ECO:0007669"/>
    <property type="project" value="UniProtKB-KW"/>
</dbReference>
<dbReference type="GO" id="GO:0003677">
    <property type="term" value="F:DNA binding"/>
    <property type="evidence" value="ECO:0007669"/>
    <property type="project" value="UniProtKB-UniRule"/>
</dbReference>
<dbReference type="GO" id="GO:0003899">
    <property type="term" value="F:DNA-directed RNA polymerase activity"/>
    <property type="evidence" value="ECO:0007669"/>
    <property type="project" value="UniProtKB-UniRule"/>
</dbReference>
<dbReference type="GO" id="GO:0000287">
    <property type="term" value="F:magnesium ion binding"/>
    <property type="evidence" value="ECO:0007669"/>
    <property type="project" value="UniProtKB-UniRule"/>
</dbReference>
<dbReference type="GO" id="GO:0008270">
    <property type="term" value="F:zinc ion binding"/>
    <property type="evidence" value="ECO:0007669"/>
    <property type="project" value="UniProtKB-UniRule"/>
</dbReference>
<dbReference type="GO" id="GO:0006351">
    <property type="term" value="P:DNA-templated transcription"/>
    <property type="evidence" value="ECO:0007669"/>
    <property type="project" value="UniProtKB-UniRule"/>
</dbReference>
<dbReference type="CDD" id="cd02655">
    <property type="entry name" value="RNAP_beta'_C"/>
    <property type="match status" value="1"/>
</dbReference>
<dbReference type="CDD" id="cd01609">
    <property type="entry name" value="RNAP_beta'_N"/>
    <property type="match status" value="1"/>
</dbReference>
<dbReference type="FunFam" id="1.10.132.30:FF:000003">
    <property type="entry name" value="DNA-directed RNA polymerase subunit beta"/>
    <property type="match status" value="1"/>
</dbReference>
<dbReference type="FunFam" id="1.10.150.390:FF:000002">
    <property type="entry name" value="DNA-directed RNA polymerase subunit beta"/>
    <property type="match status" value="1"/>
</dbReference>
<dbReference type="FunFam" id="1.10.274.100:FF:000009">
    <property type="entry name" value="DNA-directed RNA polymerase subunit beta"/>
    <property type="match status" value="1"/>
</dbReference>
<dbReference type="FunFam" id="1.10.40.90:FF:000001">
    <property type="entry name" value="DNA-directed RNA polymerase subunit beta"/>
    <property type="match status" value="1"/>
</dbReference>
<dbReference type="FunFam" id="4.10.860.120:FF:000001">
    <property type="entry name" value="DNA-directed RNA polymerase subunit beta"/>
    <property type="match status" value="1"/>
</dbReference>
<dbReference type="Gene3D" id="1.10.132.30">
    <property type="match status" value="1"/>
</dbReference>
<dbReference type="Gene3D" id="1.10.150.390">
    <property type="match status" value="1"/>
</dbReference>
<dbReference type="Gene3D" id="1.10.1790.20">
    <property type="match status" value="1"/>
</dbReference>
<dbReference type="Gene3D" id="1.10.40.90">
    <property type="match status" value="1"/>
</dbReference>
<dbReference type="Gene3D" id="2.40.40.20">
    <property type="match status" value="1"/>
</dbReference>
<dbReference type="Gene3D" id="2.40.50.100">
    <property type="match status" value="1"/>
</dbReference>
<dbReference type="Gene3D" id="4.10.860.120">
    <property type="entry name" value="RNA polymerase II, clamp domain"/>
    <property type="match status" value="1"/>
</dbReference>
<dbReference type="Gene3D" id="1.10.274.100">
    <property type="entry name" value="RNA polymerase Rpb1, domain 3"/>
    <property type="match status" value="1"/>
</dbReference>
<dbReference type="HAMAP" id="MF_01322">
    <property type="entry name" value="RNApol_bact_RpoC"/>
    <property type="match status" value="1"/>
</dbReference>
<dbReference type="InterPro" id="IPR045867">
    <property type="entry name" value="DNA-dir_RpoC_beta_prime"/>
</dbReference>
<dbReference type="InterPro" id="IPR012754">
    <property type="entry name" value="DNA-dir_RpoC_beta_prime_bact"/>
</dbReference>
<dbReference type="InterPro" id="IPR000722">
    <property type="entry name" value="RNA_pol_asu"/>
</dbReference>
<dbReference type="InterPro" id="IPR006592">
    <property type="entry name" value="RNA_pol_N"/>
</dbReference>
<dbReference type="InterPro" id="IPR007080">
    <property type="entry name" value="RNA_pol_Rpb1_1"/>
</dbReference>
<dbReference type="InterPro" id="IPR007066">
    <property type="entry name" value="RNA_pol_Rpb1_3"/>
</dbReference>
<dbReference type="InterPro" id="IPR042102">
    <property type="entry name" value="RNA_pol_Rpb1_3_sf"/>
</dbReference>
<dbReference type="InterPro" id="IPR007083">
    <property type="entry name" value="RNA_pol_Rpb1_4"/>
</dbReference>
<dbReference type="InterPro" id="IPR007081">
    <property type="entry name" value="RNA_pol_Rpb1_5"/>
</dbReference>
<dbReference type="InterPro" id="IPR044893">
    <property type="entry name" value="RNA_pol_Rpb1_clamp_domain"/>
</dbReference>
<dbReference type="InterPro" id="IPR038120">
    <property type="entry name" value="Rpb1_funnel_sf"/>
</dbReference>
<dbReference type="NCBIfam" id="NF011498">
    <property type="entry name" value="PRK14906.1"/>
    <property type="match status" value="1"/>
</dbReference>
<dbReference type="NCBIfam" id="TIGR02386">
    <property type="entry name" value="rpoC_TIGR"/>
    <property type="match status" value="1"/>
</dbReference>
<dbReference type="PANTHER" id="PTHR19376">
    <property type="entry name" value="DNA-DIRECTED RNA POLYMERASE"/>
    <property type="match status" value="1"/>
</dbReference>
<dbReference type="PANTHER" id="PTHR19376:SF54">
    <property type="entry name" value="DNA-DIRECTED RNA POLYMERASE SUBUNIT BETA"/>
    <property type="match status" value="1"/>
</dbReference>
<dbReference type="Pfam" id="PF04997">
    <property type="entry name" value="RNA_pol_Rpb1_1"/>
    <property type="match status" value="1"/>
</dbReference>
<dbReference type="Pfam" id="PF00623">
    <property type="entry name" value="RNA_pol_Rpb1_2"/>
    <property type="match status" value="1"/>
</dbReference>
<dbReference type="Pfam" id="PF04983">
    <property type="entry name" value="RNA_pol_Rpb1_3"/>
    <property type="match status" value="1"/>
</dbReference>
<dbReference type="Pfam" id="PF05000">
    <property type="entry name" value="RNA_pol_Rpb1_4"/>
    <property type="match status" value="1"/>
</dbReference>
<dbReference type="Pfam" id="PF04998">
    <property type="entry name" value="RNA_pol_Rpb1_5"/>
    <property type="match status" value="1"/>
</dbReference>
<dbReference type="SMART" id="SM00663">
    <property type="entry name" value="RPOLA_N"/>
    <property type="match status" value="1"/>
</dbReference>
<dbReference type="SUPFAM" id="SSF64484">
    <property type="entry name" value="beta and beta-prime subunits of DNA dependent RNA-polymerase"/>
    <property type="match status" value="1"/>
</dbReference>
<evidence type="ECO:0000255" key="1">
    <source>
        <dbReference type="HAMAP-Rule" id="MF_01322"/>
    </source>
</evidence>
<feature type="chain" id="PRO_1000165845" description="DNA-directed RNA polymerase subunit beta'">
    <location>
        <begin position="1"/>
        <end position="1316"/>
    </location>
</feature>
<feature type="binding site" evidence="1">
    <location>
        <position position="60"/>
    </location>
    <ligand>
        <name>Zn(2+)</name>
        <dbReference type="ChEBI" id="CHEBI:29105"/>
        <label>1</label>
    </ligand>
</feature>
<feature type="binding site" evidence="1">
    <location>
        <position position="62"/>
    </location>
    <ligand>
        <name>Zn(2+)</name>
        <dbReference type="ChEBI" id="CHEBI:29105"/>
        <label>1</label>
    </ligand>
</feature>
<feature type="binding site" evidence="1">
    <location>
        <position position="75"/>
    </location>
    <ligand>
        <name>Zn(2+)</name>
        <dbReference type="ChEBI" id="CHEBI:29105"/>
        <label>1</label>
    </ligand>
</feature>
<feature type="binding site" evidence="1">
    <location>
        <position position="78"/>
    </location>
    <ligand>
        <name>Zn(2+)</name>
        <dbReference type="ChEBI" id="CHEBI:29105"/>
        <label>1</label>
    </ligand>
</feature>
<feature type="binding site" evidence="1">
    <location>
        <position position="535"/>
    </location>
    <ligand>
        <name>Mg(2+)</name>
        <dbReference type="ChEBI" id="CHEBI:18420"/>
    </ligand>
</feature>
<feature type="binding site" evidence="1">
    <location>
        <position position="537"/>
    </location>
    <ligand>
        <name>Mg(2+)</name>
        <dbReference type="ChEBI" id="CHEBI:18420"/>
    </ligand>
</feature>
<feature type="binding site" evidence="1">
    <location>
        <position position="539"/>
    </location>
    <ligand>
        <name>Mg(2+)</name>
        <dbReference type="ChEBI" id="CHEBI:18420"/>
    </ligand>
</feature>
<feature type="binding site" evidence="1">
    <location>
        <position position="891"/>
    </location>
    <ligand>
        <name>Zn(2+)</name>
        <dbReference type="ChEBI" id="CHEBI:29105"/>
        <label>2</label>
    </ligand>
</feature>
<feature type="binding site" evidence="1">
    <location>
        <position position="968"/>
    </location>
    <ligand>
        <name>Zn(2+)</name>
        <dbReference type="ChEBI" id="CHEBI:29105"/>
        <label>2</label>
    </ligand>
</feature>
<feature type="binding site" evidence="1">
    <location>
        <position position="975"/>
    </location>
    <ligand>
        <name>Zn(2+)</name>
        <dbReference type="ChEBI" id="CHEBI:29105"/>
        <label>2</label>
    </ligand>
</feature>
<feature type="binding site" evidence="1">
    <location>
        <position position="978"/>
    </location>
    <ligand>
        <name>Zn(2+)</name>
        <dbReference type="ChEBI" id="CHEBI:29105"/>
        <label>2</label>
    </ligand>
</feature>
<keyword id="KW-0240">DNA-directed RNA polymerase</keyword>
<keyword id="KW-0460">Magnesium</keyword>
<keyword id="KW-0479">Metal-binding</keyword>
<keyword id="KW-0548">Nucleotidyltransferase</keyword>
<keyword id="KW-0804">Transcription</keyword>
<keyword id="KW-0808">Transferase</keyword>
<keyword id="KW-0862">Zinc</keyword>
<gene>
    <name evidence="1" type="primary">rpoC</name>
    <name type="ordered locus">JTY_0687</name>
</gene>
<protein>
    <recommendedName>
        <fullName evidence="1">DNA-directed RNA polymerase subunit beta'</fullName>
        <shortName evidence="1">RNAP subunit beta'</shortName>
        <ecNumber evidence="1">2.7.7.6</ecNumber>
    </recommendedName>
    <alternativeName>
        <fullName evidence="1">RNA polymerase subunit beta'</fullName>
    </alternativeName>
    <alternativeName>
        <fullName evidence="1">Transcriptase subunit beta'</fullName>
    </alternativeName>
</protein>
<organism>
    <name type="scientific">Mycobacterium bovis (strain BCG / Tokyo 172 / ATCC 35737 / TMC 1019)</name>
    <dbReference type="NCBI Taxonomy" id="561275"/>
    <lineage>
        <taxon>Bacteria</taxon>
        <taxon>Bacillati</taxon>
        <taxon>Actinomycetota</taxon>
        <taxon>Actinomycetes</taxon>
        <taxon>Mycobacteriales</taxon>
        <taxon>Mycobacteriaceae</taxon>
        <taxon>Mycobacterium</taxon>
        <taxon>Mycobacterium tuberculosis complex</taxon>
    </lineage>
</organism>
<reference key="1">
    <citation type="journal article" date="2009" name="Vaccine">
        <title>Whole genome sequence analysis of Mycobacterium bovis bacillus Calmette-Guerin (BCG) Tokyo 172: a comparative study of BCG vaccine substrains.</title>
        <authorList>
            <person name="Seki M."/>
            <person name="Honda I."/>
            <person name="Fujita I."/>
            <person name="Yano I."/>
            <person name="Yamamoto S."/>
            <person name="Koyama A."/>
        </authorList>
    </citation>
    <scope>NUCLEOTIDE SEQUENCE [LARGE SCALE GENOMIC DNA]</scope>
    <source>
        <strain>BCG / Tokyo 172 / ATCC 35737 / TMC 1019</strain>
    </source>
</reference>
<comment type="function">
    <text evidence="1">DNA-dependent RNA polymerase catalyzes the transcription of DNA into RNA using the four ribonucleoside triphosphates as substrates.</text>
</comment>
<comment type="catalytic activity">
    <reaction evidence="1">
        <text>RNA(n) + a ribonucleoside 5'-triphosphate = RNA(n+1) + diphosphate</text>
        <dbReference type="Rhea" id="RHEA:21248"/>
        <dbReference type="Rhea" id="RHEA-COMP:14527"/>
        <dbReference type="Rhea" id="RHEA-COMP:17342"/>
        <dbReference type="ChEBI" id="CHEBI:33019"/>
        <dbReference type="ChEBI" id="CHEBI:61557"/>
        <dbReference type="ChEBI" id="CHEBI:140395"/>
        <dbReference type="EC" id="2.7.7.6"/>
    </reaction>
</comment>
<comment type="cofactor">
    <cofactor evidence="1">
        <name>Mg(2+)</name>
        <dbReference type="ChEBI" id="CHEBI:18420"/>
    </cofactor>
    <text evidence="1">Binds 1 Mg(2+) ion per subunit.</text>
</comment>
<comment type="cofactor">
    <cofactor evidence="1">
        <name>Zn(2+)</name>
        <dbReference type="ChEBI" id="CHEBI:29105"/>
    </cofactor>
    <text evidence="1">Binds 2 Zn(2+) ions per subunit.</text>
</comment>
<comment type="subunit">
    <text evidence="1">The RNAP catalytic core consists of 2 alpha, 1 beta, 1 beta' and 1 omega subunit. When a sigma factor is associated with the core the holoenzyme is formed, which can initiate transcription.</text>
</comment>
<comment type="similarity">
    <text evidence="1">Belongs to the RNA polymerase beta' chain family.</text>
</comment>